<gene>
    <name type="primary">CLN1</name>
    <name type="ORF">AWRI796_1063</name>
</gene>
<dbReference type="EMBL" id="ADVS01000015">
    <property type="protein sequence ID" value="EGA75400.1"/>
    <property type="molecule type" value="Genomic_DNA"/>
</dbReference>
<dbReference type="SMR" id="E7KB73"/>
<dbReference type="HOGENOM" id="CLU_141728_1_0_1"/>
<dbReference type="OMA" id="HFDMLDQ"/>
<dbReference type="OrthoDB" id="5424991at2759"/>
<dbReference type="GO" id="GO:0031083">
    <property type="term" value="C:BLOC-1 complex"/>
    <property type="evidence" value="ECO:0007669"/>
    <property type="project" value="InterPro"/>
</dbReference>
<dbReference type="GO" id="GO:0005737">
    <property type="term" value="C:cytoplasm"/>
    <property type="evidence" value="ECO:0007669"/>
    <property type="project" value="UniProtKB-SubCell"/>
</dbReference>
<dbReference type="GO" id="GO:0007032">
    <property type="term" value="P:endosome organization"/>
    <property type="evidence" value="ECO:0007669"/>
    <property type="project" value="TreeGrafter"/>
</dbReference>
<dbReference type="CDD" id="cd24144">
    <property type="entry name" value="BLOC1_CNL1"/>
    <property type="match status" value="1"/>
</dbReference>
<dbReference type="InterPro" id="IPR034455">
    <property type="entry name" value="CNL1"/>
</dbReference>
<dbReference type="PANTHER" id="PTHR39145">
    <property type="entry name" value="BIOGENESIS OF LYSOSOME-RELATED ORGANELLES COMPLEX 1 SUBUNIT CNL1"/>
    <property type="match status" value="1"/>
</dbReference>
<dbReference type="PANTHER" id="PTHR39145:SF1">
    <property type="entry name" value="BIOGENESIS OF LYSOSOME-RELATED ORGANELLES COMPLEX 1 SUBUNIT CNL1"/>
    <property type="match status" value="1"/>
</dbReference>
<name>BL1S4_YEASA</name>
<feature type="chain" id="PRO_0000410650" description="Biogenesis of lysosome-related organelles complex 1 subunit CNL1">
    <location>
        <begin position="1"/>
        <end position="122"/>
    </location>
</feature>
<feature type="region of interest" description="Disordered" evidence="3">
    <location>
        <begin position="1"/>
        <end position="21"/>
    </location>
</feature>
<feature type="coiled-coil region" evidence="2">
    <location>
        <begin position="63"/>
        <end position="95"/>
    </location>
</feature>
<feature type="compositionally biased region" description="Basic and acidic residues" evidence="3">
    <location>
        <begin position="1"/>
        <end position="10"/>
    </location>
</feature>
<proteinExistence type="inferred from homology"/>
<protein>
    <recommendedName>
        <fullName>Biogenesis of lysosome-related organelles complex 1 subunit CNL1</fullName>
        <shortName>BLOC-1 subunit CNL1</shortName>
    </recommendedName>
    <alternativeName>
        <fullName>CNO-like protein 1</fullName>
    </alternativeName>
</protein>
<keyword id="KW-0175">Coiled coil</keyword>
<keyword id="KW-0963">Cytoplasm</keyword>
<keyword id="KW-0813">Transport</keyword>
<accession>E7KB73</accession>
<organism>
    <name type="scientific">Saccharomyces cerevisiae (strain AWRI796)</name>
    <name type="common">Baker's yeast</name>
    <dbReference type="NCBI Taxonomy" id="764097"/>
    <lineage>
        <taxon>Eukaryota</taxon>
        <taxon>Fungi</taxon>
        <taxon>Dikarya</taxon>
        <taxon>Ascomycota</taxon>
        <taxon>Saccharomycotina</taxon>
        <taxon>Saccharomycetes</taxon>
        <taxon>Saccharomycetales</taxon>
        <taxon>Saccharomycetaceae</taxon>
        <taxon>Saccharomyces</taxon>
    </lineage>
</organism>
<sequence>MQDNSSHSRESASAGDDPLGIDKLTVDYDYLLYKIRDYVQSIQLDTTELCKKQNEVMVNGIIENTIDKNIAKFKELLEKCDTLENHYEMLNQLAIITDTFKERIAEAVNNYNSLKKGASKSK</sequence>
<evidence type="ECO:0000250" key="1"/>
<evidence type="ECO:0000255" key="2"/>
<evidence type="ECO:0000256" key="3">
    <source>
        <dbReference type="SAM" id="MobiDB-lite"/>
    </source>
</evidence>
<evidence type="ECO:0000305" key="4"/>
<reference key="1">
    <citation type="journal article" date="2011" name="PLoS Genet.">
        <title>Whole-genome comparison reveals novel genetic elements that characterize the genome of industrial strains of Saccharomyces cerevisiae.</title>
        <authorList>
            <person name="Borneman A.R."/>
            <person name="Desany B.A."/>
            <person name="Riches D."/>
            <person name="Affourtit J.P."/>
            <person name="Forgan A.H."/>
            <person name="Pretorius I.S."/>
            <person name="Egholm M."/>
            <person name="Chambers P.J."/>
        </authorList>
    </citation>
    <scope>NUCLEOTIDE SEQUENCE [LARGE SCALE GENOMIC DNA]</scope>
    <source>
        <strain>AWRI796</strain>
    </source>
</reference>
<comment type="function">
    <text evidence="1">Component of the biogenesis of lysosome-related organelles complex-1 (BLOC-1), a complex that is involved in endosomal cargo sorting.</text>
</comment>
<comment type="subunit">
    <text evidence="1">Component of the biogenesis of lysosome-related organelles complex-1 (BLOC-1) composed of at least BLI1, BLS1, CNL1, KXD1, SNN1 and VAB2.</text>
</comment>
<comment type="subcellular location">
    <subcellularLocation>
        <location evidence="1">Cytoplasm</location>
    </subcellularLocation>
    <text evidence="1">Punctate pattern.</text>
</comment>
<comment type="similarity">
    <text evidence="4">Belongs to the BLOC1S4 family.</text>
</comment>